<feature type="chain" id="PRO_0000245607" description="IQ motif and SEC7 domain-containing protein 1">
    <location>
        <begin position="1"/>
        <end position="961"/>
    </location>
</feature>
<feature type="domain" description="IQ" evidence="4">
    <location>
        <begin position="133"/>
        <end position="162"/>
    </location>
</feature>
<feature type="domain" description="SEC7" evidence="5">
    <location>
        <begin position="515"/>
        <end position="708"/>
    </location>
</feature>
<feature type="domain" description="PH">
    <location>
        <begin position="772"/>
        <end position="864"/>
    </location>
</feature>
<feature type="region of interest" description="Disordered" evidence="6">
    <location>
        <begin position="21"/>
        <end position="113"/>
    </location>
</feature>
<feature type="region of interest" description="Disordered" evidence="6">
    <location>
        <begin position="263"/>
        <end position="291"/>
    </location>
</feature>
<feature type="region of interest" description="Disordered" evidence="6">
    <location>
        <begin position="310"/>
        <end position="332"/>
    </location>
</feature>
<feature type="region of interest" description="Disordered" evidence="6">
    <location>
        <begin position="347"/>
        <end position="515"/>
    </location>
</feature>
<feature type="region of interest" description="Disordered" evidence="6">
    <location>
        <begin position="920"/>
        <end position="961"/>
    </location>
</feature>
<feature type="coiled-coil region" evidence="3">
    <location>
        <begin position="846"/>
        <end position="877"/>
    </location>
</feature>
<feature type="compositionally biased region" description="Polar residues" evidence="6">
    <location>
        <begin position="29"/>
        <end position="38"/>
    </location>
</feature>
<feature type="compositionally biased region" description="Basic and acidic residues" evidence="6">
    <location>
        <begin position="272"/>
        <end position="291"/>
    </location>
</feature>
<feature type="compositionally biased region" description="Basic and acidic residues" evidence="6">
    <location>
        <begin position="364"/>
        <end position="374"/>
    </location>
</feature>
<feature type="compositionally biased region" description="Basic and acidic residues" evidence="6">
    <location>
        <begin position="428"/>
        <end position="444"/>
    </location>
</feature>
<feature type="compositionally biased region" description="Low complexity" evidence="6">
    <location>
        <begin position="469"/>
        <end position="487"/>
    </location>
</feature>
<feature type="compositionally biased region" description="Polar residues" evidence="6">
    <location>
        <begin position="938"/>
        <end position="947"/>
    </location>
</feature>
<feature type="compositionally biased region" description="Pro residues" evidence="6">
    <location>
        <begin position="951"/>
        <end position="961"/>
    </location>
</feature>
<feature type="modified residue" description="Phosphoserine" evidence="2">
    <location>
        <position position="88"/>
    </location>
</feature>
<feature type="modified residue" description="Phosphoserine" evidence="13">
    <location>
        <position position="104"/>
    </location>
</feature>
<feature type="modified residue" description="Phosphoserine" evidence="13">
    <location>
        <position position="106"/>
    </location>
</feature>
<feature type="modified residue" description="Phosphoserine" evidence="12 13">
    <location>
        <position position="179"/>
    </location>
</feature>
<feature type="modified residue" description="Phosphoserine" evidence="13">
    <location>
        <position position="247"/>
    </location>
</feature>
<feature type="modified residue" description="Phosphoserine" evidence="13">
    <location>
        <position position="251"/>
    </location>
</feature>
<feature type="modified residue" description="Phosphoserine" evidence="13">
    <location>
        <position position="510"/>
    </location>
</feature>
<feature type="modified residue" description="Phosphoserine" evidence="11 13">
    <location>
        <position position="513"/>
    </location>
</feature>
<feature type="modified residue" description="Phosphoserine" evidence="2">
    <location>
        <position position="890"/>
    </location>
</feature>
<feature type="modified residue" description="Phosphotyrosine" evidence="2">
    <location>
        <position position="909"/>
    </location>
</feature>
<feature type="modified residue" description="Phosphoserine" evidence="2">
    <location>
        <position position="922"/>
    </location>
</feature>
<feature type="modified residue" description="Phosphoserine" evidence="13">
    <location>
        <position position="923"/>
    </location>
</feature>
<feature type="splice variant" id="VSP_019759" description="In isoform 2." evidence="9">
    <original>MWCLHCNSERTQSLLELELDSG</original>
    <variation>MKGDGGAVWGLMWKYCISVRTLS</variation>
    <location>
        <begin position="1"/>
        <end position="22"/>
    </location>
</feature>
<feature type="sequence conflict" description="In Ref. 3; BAD90418." evidence="10" ref="3">
    <original>E</original>
    <variation>Q</variation>
    <location>
        <position position="759"/>
    </location>
</feature>
<evidence type="ECO:0000250" key="1">
    <source>
        <dbReference type="UniProtKB" id="A0A0G2JUG7"/>
    </source>
</evidence>
<evidence type="ECO:0000250" key="2">
    <source>
        <dbReference type="UniProtKB" id="Q6DN90"/>
    </source>
</evidence>
<evidence type="ECO:0000255" key="3"/>
<evidence type="ECO:0000255" key="4">
    <source>
        <dbReference type="PROSITE-ProRule" id="PRU00116"/>
    </source>
</evidence>
<evidence type="ECO:0000255" key="5">
    <source>
        <dbReference type="PROSITE-ProRule" id="PRU00189"/>
    </source>
</evidence>
<evidence type="ECO:0000256" key="6">
    <source>
        <dbReference type="SAM" id="MobiDB-lite"/>
    </source>
</evidence>
<evidence type="ECO:0000269" key="7">
    <source>
    </source>
</evidence>
<evidence type="ECO:0000269" key="8">
    <source>
    </source>
</evidence>
<evidence type="ECO:0000303" key="9">
    <source>
    </source>
</evidence>
<evidence type="ECO:0000305" key="10"/>
<evidence type="ECO:0007744" key="11">
    <source>
    </source>
</evidence>
<evidence type="ECO:0007744" key="12">
    <source>
    </source>
</evidence>
<evidence type="ECO:0007744" key="13">
    <source>
    </source>
</evidence>
<protein>
    <recommendedName>
        <fullName>IQ motif and SEC7 domain-containing protein 1</fullName>
    </recommendedName>
</protein>
<name>IQEC1_MOUSE</name>
<proteinExistence type="evidence at protein level"/>
<reference key="1">
    <citation type="journal article" date="2009" name="PLoS Biol.">
        <title>Lineage-specific biology revealed by a finished genome assembly of the mouse.</title>
        <authorList>
            <person name="Church D.M."/>
            <person name="Goodstadt L."/>
            <person name="Hillier L.W."/>
            <person name="Zody M.C."/>
            <person name="Goldstein S."/>
            <person name="She X."/>
            <person name="Bult C.J."/>
            <person name="Agarwala R."/>
            <person name="Cherry J.L."/>
            <person name="DiCuccio M."/>
            <person name="Hlavina W."/>
            <person name="Kapustin Y."/>
            <person name="Meric P."/>
            <person name="Maglott D."/>
            <person name="Birtle Z."/>
            <person name="Marques A.C."/>
            <person name="Graves T."/>
            <person name="Zhou S."/>
            <person name="Teague B."/>
            <person name="Potamousis K."/>
            <person name="Churas C."/>
            <person name="Place M."/>
            <person name="Herschleb J."/>
            <person name="Runnheim R."/>
            <person name="Forrest D."/>
            <person name="Amos-Landgraf J."/>
            <person name="Schwartz D.C."/>
            <person name="Cheng Z."/>
            <person name="Lindblad-Toh K."/>
            <person name="Eichler E.E."/>
            <person name="Ponting C.P."/>
        </authorList>
    </citation>
    <scope>NUCLEOTIDE SEQUENCE [LARGE SCALE GENOMIC DNA]</scope>
    <source>
        <strain>C57BL/6J</strain>
    </source>
</reference>
<reference key="2">
    <citation type="journal article" date="2005" name="Science">
        <title>The transcriptional landscape of the mammalian genome.</title>
        <authorList>
            <person name="Carninci P."/>
            <person name="Kasukawa T."/>
            <person name="Katayama S."/>
            <person name="Gough J."/>
            <person name="Frith M.C."/>
            <person name="Maeda N."/>
            <person name="Oyama R."/>
            <person name="Ravasi T."/>
            <person name="Lenhard B."/>
            <person name="Wells C."/>
            <person name="Kodzius R."/>
            <person name="Shimokawa K."/>
            <person name="Bajic V.B."/>
            <person name="Brenner S.E."/>
            <person name="Batalov S."/>
            <person name="Forrest A.R."/>
            <person name="Zavolan M."/>
            <person name="Davis M.J."/>
            <person name="Wilming L.G."/>
            <person name="Aidinis V."/>
            <person name="Allen J.E."/>
            <person name="Ambesi-Impiombato A."/>
            <person name="Apweiler R."/>
            <person name="Aturaliya R.N."/>
            <person name="Bailey T.L."/>
            <person name="Bansal M."/>
            <person name="Baxter L."/>
            <person name="Beisel K.W."/>
            <person name="Bersano T."/>
            <person name="Bono H."/>
            <person name="Chalk A.M."/>
            <person name="Chiu K.P."/>
            <person name="Choudhary V."/>
            <person name="Christoffels A."/>
            <person name="Clutterbuck D.R."/>
            <person name="Crowe M.L."/>
            <person name="Dalla E."/>
            <person name="Dalrymple B.P."/>
            <person name="de Bono B."/>
            <person name="Della Gatta G."/>
            <person name="di Bernardo D."/>
            <person name="Down T."/>
            <person name="Engstrom P."/>
            <person name="Fagiolini M."/>
            <person name="Faulkner G."/>
            <person name="Fletcher C.F."/>
            <person name="Fukushima T."/>
            <person name="Furuno M."/>
            <person name="Futaki S."/>
            <person name="Gariboldi M."/>
            <person name="Georgii-Hemming P."/>
            <person name="Gingeras T.R."/>
            <person name="Gojobori T."/>
            <person name="Green R.E."/>
            <person name="Gustincich S."/>
            <person name="Harbers M."/>
            <person name="Hayashi Y."/>
            <person name="Hensch T.K."/>
            <person name="Hirokawa N."/>
            <person name="Hill D."/>
            <person name="Huminiecki L."/>
            <person name="Iacono M."/>
            <person name="Ikeo K."/>
            <person name="Iwama A."/>
            <person name="Ishikawa T."/>
            <person name="Jakt M."/>
            <person name="Kanapin A."/>
            <person name="Katoh M."/>
            <person name="Kawasawa Y."/>
            <person name="Kelso J."/>
            <person name="Kitamura H."/>
            <person name="Kitano H."/>
            <person name="Kollias G."/>
            <person name="Krishnan S.P."/>
            <person name="Kruger A."/>
            <person name="Kummerfeld S.K."/>
            <person name="Kurochkin I.V."/>
            <person name="Lareau L.F."/>
            <person name="Lazarevic D."/>
            <person name="Lipovich L."/>
            <person name="Liu J."/>
            <person name="Liuni S."/>
            <person name="McWilliam S."/>
            <person name="Madan Babu M."/>
            <person name="Madera M."/>
            <person name="Marchionni L."/>
            <person name="Matsuda H."/>
            <person name="Matsuzawa S."/>
            <person name="Miki H."/>
            <person name="Mignone F."/>
            <person name="Miyake S."/>
            <person name="Morris K."/>
            <person name="Mottagui-Tabar S."/>
            <person name="Mulder N."/>
            <person name="Nakano N."/>
            <person name="Nakauchi H."/>
            <person name="Ng P."/>
            <person name="Nilsson R."/>
            <person name="Nishiguchi S."/>
            <person name="Nishikawa S."/>
            <person name="Nori F."/>
            <person name="Ohara O."/>
            <person name="Okazaki Y."/>
            <person name="Orlando V."/>
            <person name="Pang K.C."/>
            <person name="Pavan W.J."/>
            <person name="Pavesi G."/>
            <person name="Pesole G."/>
            <person name="Petrovsky N."/>
            <person name="Piazza S."/>
            <person name="Reed J."/>
            <person name="Reid J.F."/>
            <person name="Ring B.Z."/>
            <person name="Ringwald M."/>
            <person name="Rost B."/>
            <person name="Ruan Y."/>
            <person name="Salzberg S.L."/>
            <person name="Sandelin A."/>
            <person name="Schneider C."/>
            <person name="Schoenbach C."/>
            <person name="Sekiguchi K."/>
            <person name="Semple C.A."/>
            <person name="Seno S."/>
            <person name="Sessa L."/>
            <person name="Sheng Y."/>
            <person name="Shibata Y."/>
            <person name="Shimada H."/>
            <person name="Shimada K."/>
            <person name="Silva D."/>
            <person name="Sinclair B."/>
            <person name="Sperling S."/>
            <person name="Stupka E."/>
            <person name="Sugiura K."/>
            <person name="Sultana R."/>
            <person name="Takenaka Y."/>
            <person name="Taki K."/>
            <person name="Tammoja K."/>
            <person name="Tan S.L."/>
            <person name="Tang S."/>
            <person name="Taylor M.S."/>
            <person name="Tegner J."/>
            <person name="Teichmann S.A."/>
            <person name="Ueda H.R."/>
            <person name="van Nimwegen E."/>
            <person name="Verardo R."/>
            <person name="Wei C.L."/>
            <person name="Yagi K."/>
            <person name="Yamanishi H."/>
            <person name="Zabarovsky E."/>
            <person name="Zhu S."/>
            <person name="Zimmer A."/>
            <person name="Hide W."/>
            <person name="Bult C."/>
            <person name="Grimmond S.M."/>
            <person name="Teasdale R.D."/>
            <person name="Liu E.T."/>
            <person name="Brusic V."/>
            <person name="Quackenbush J."/>
            <person name="Wahlestedt C."/>
            <person name="Mattick J.S."/>
            <person name="Hume D.A."/>
            <person name="Kai C."/>
            <person name="Sasaki D."/>
            <person name="Tomaru Y."/>
            <person name="Fukuda S."/>
            <person name="Kanamori-Katayama M."/>
            <person name="Suzuki M."/>
            <person name="Aoki J."/>
            <person name="Arakawa T."/>
            <person name="Iida J."/>
            <person name="Imamura K."/>
            <person name="Itoh M."/>
            <person name="Kato T."/>
            <person name="Kawaji H."/>
            <person name="Kawagashira N."/>
            <person name="Kawashima T."/>
            <person name="Kojima M."/>
            <person name="Kondo S."/>
            <person name="Konno H."/>
            <person name="Nakano K."/>
            <person name="Ninomiya N."/>
            <person name="Nishio T."/>
            <person name="Okada M."/>
            <person name="Plessy C."/>
            <person name="Shibata K."/>
            <person name="Shiraki T."/>
            <person name="Suzuki S."/>
            <person name="Tagami M."/>
            <person name="Waki K."/>
            <person name="Watahiki A."/>
            <person name="Okamura-Oho Y."/>
            <person name="Suzuki H."/>
            <person name="Kawai J."/>
            <person name="Hayashizaki Y."/>
        </authorList>
    </citation>
    <scope>NUCLEOTIDE SEQUENCE [LARGE SCALE MRNA] OF 1-217 (ISOFORM 2)</scope>
    <source>
        <strain>C57BL/6J</strain>
        <tissue>Inner ear</tissue>
    </source>
</reference>
<reference key="3">
    <citation type="journal article" date="2004" name="Genome Res.">
        <title>The status, quality, and expansion of the NIH full-length cDNA project: the Mammalian Gene Collection (MGC).</title>
        <authorList>
            <consortium name="The MGC Project Team"/>
        </authorList>
    </citation>
    <scope>NUCLEOTIDE SEQUENCE [LARGE SCALE MRNA] OF 414-961</scope>
    <source>
        <tissue>Eye</tissue>
    </source>
</reference>
<reference key="4">
    <citation type="submission" date="2005-02" db="EMBL/GenBank/DDBJ databases">
        <title>Prediction of the coding sequences of mouse homologues of KIAA gene. The complete nucleotide sequences of mouse KIAA-homologous cDNAs identified by screening of terminal sequences of cDNA clones randomly sampled from size-fractionated libraries.</title>
        <authorList>
            <person name="Okazaki N."/>
            <person name="Kikuno R.F."/>
            <person name="Ohara R."/>
            <person name="Inamoto S."/>
            <person name="Nagase T."/>
            <person name="Ohara O."/>
            <person name="Koga H."/>
        </authorList>
    </citation>
    <scope>NUCLEOTIDE SEQUENCE [LARGE SCALE MRNA] OF 432-961</scope>
    <source>
        <tissue>Fetal brain</tissue>
    </source>
</reference>
<reference key="5">
    <citation type="journal article" date="2006" name="Mol. Cell. Proteomics">
        <title>Comprehensive identification of phosphorylation sites in postsynaptic density preparations.</title>
        <authorList>
            <person name="Trinidad J.C."/>
            <person name="Specht C.G."/>
            <person name="Thalhammer A."/>
            <person name="Schoepfer R."/>
            <person name="Burlingame A.L."/>
        </authorList>
    </citation>
    <scope>PHOSPHORYLATION [LARGE SCALE ANALYSIS] AT SER-513</scope>
    <scope>IDENTIFICATION BY MASS SPECTROMETRY [LARGE SCALE ANALYSIS]</scope>
    <source>
        <tissue>Brain</tissue>
    </source>
</reference>
<reference key="6">
    <citation type="journal article" date="2007" name="Mol. Cell. Proteomics">
        <title>Qualitative and quantitative analyses of protein phosphorylation in naive and stimulated mouse synaptosomal preparations.</title>
        <authorList>
            <person name="Munton R.P."/>
            <person name="Tweedie-Cullen R."/>
            <person name="Livingstone-Zatchej M."/>
            <person name="Weinandy F."/>
            <person name="Waidelich M."/>
            <person name="Longo D."/>
            <person name="Gehrig P."/>
            <person name="Potthast F."/>
            <person name="Rutishauser D."/>
            <person name="Gerrits B."/>
            <person name="Panse C."/>
            <person name="Schlapbach R."/>
            <person name="Mansuy I.M."/>
        </authorList>
    </citation>
    <scope>IDENTIFICATION BY MASS SPECTROMETRY [LARGE SCALE ANALYSIS]</scope>
    <source>
        <tissue>Brain cortex</tissue>
    </source>
</reference>
<reference key="7">
    <citation type="journal article" date="2007" name="Proc. Natl. Acad. Sci. U.S.A.">
        <title>Large-scale phosphorylation analysis of mouse liver.</title>
        <authorList>
            <person name="Villen J."/>
            <person name="Beausoleil S.A."/>
            <person name="Gerber S.A."/>
            <person name="Gygi S.P."/>
        </authorList>
    </citation>
    <scope>IDENTIFICATION BY MASS SPECTROMETRY [LARGE SCALE ANALYSIS]</scope>
    <source>
        <tissue>Liver</tissue>
    </source>
</reference>
<reference key="8">
    <citation type="journal article" date="2009" name="Immunity">
        <title>The phagosomal proteome in interferon-gamma-activated macrophages.</title>
        <authorList>
            <person name="Trost M."/>
            <person name="English L."/>
            <person name="Lemieux S."/>
            <person name="Courcelles M."/>
            <person name="Desjardins M."/>
            <person name="Thibault P."/>
        </authorList>
    </citation>
    <scope>PHOSPHORYLATION [LARGE SCALE ANALYSIS] AT SER-179</scope>
    <scope>IDENTIFICATION BY MASS SPECTROMETRY [LARGE SCALE ANALYSIS]</scope>
</reference>
<reference key="9">
    <citation type="journal article" date="2010" name="Cell">
        <title>A tissue-specific atlas of mouse protein phosphorylation and expression.</title>
        <authorList>
            <person name="Huttlin E.L."/>
            <person name="Jedrychowski M.P."/>
            <person name="Elias J.E."/>
            <person name="Goswami T."/>
            <person name="Rad R."/>
            <person name="Beausoleil S.A."/>
            <person name="Villen J."/>
            <person name="Haas W."/>
            <person name="Sowa M.E."/>
            <person name="Gygi S.P."/>
        </authorList>
    </citation>
    <scope>PHOSPHORYLATION [LARGE SCALE ANALYSIS] AT SER-104; SER-106; SER-179; SER-247; SER-251; SER-510; SER-513 AND SER-923</scope>
    <scope>IDENTIFICATION BY MASS SPECTROMETRY [LARGE SCALE ANALYSIS]</scope>
    <source>
        <tissue>Brain</tissue>
        <tissue>Brown adipose tissue</tissue>
        <tissue>Heart</tissue>
        <tissue>Kidney</tissue>
        <tissue>Liver</tissue>
        <tissue>Lung</tissue>
        <tissue>Pancreas</tissue>
        <tissue>Spleen</tissue>
        <tissue>Testis</tissue>
    </source>
</reference>
<reference key="10">
    <citation type="journal article" date="2010" name="Neuron">
        <title>AMPA receptor signaling through BRAG2 and Arf6 critical for long-term synaptic depression.</title>
        <authorList>
            <person name="Scholz R."/>
            <person name="Berberich S."/>
            <person name="Rathgeber L."/>
            <person name="Kolleker A."/>
            <person name="Koehr G."/>
            <person name="Kornau H.C."/>
        </authorList>
    </citation>
    <scope>SUBCELLULAR LOCATION</scope>
    <scope>DEVELOPMENTAL STAGE</scope>
    <scope>TISSUE SPECIFICITY</scope>
</reference>
<reference key="11">
    <citation type="journal article" date="2019" name="Am. J. Hum. Genet.">
        <title>Bi-allelic Variants in IQSEC1 Cause Intellectual Disability, Developmental Delay, and Short Stature.</title>
        <authorList>
            <person name="Ansar M."/>
            <person name="Chung H.L."/>
            <person name="Al-Otaibi A."/>
            <person name="Elagabani M.N."/>
            <person name="Ravenscroft T.A."/>
            <person name="Paracha S.A."/>
            <person name="Scholz R."/>
            <person name="Abdel Magid T."/>
            <person name="Sarwar M.T."/>
            <person name="Shah S.F."/>
            <person name="Qaisar A.A."/>
            <person name="Makrythanasis P."/>
            <person name="Marcogliese P.C."/>
            <person name="Kamsteeg E.J."/>
            <person name="Falconnet E."/>
            <person name="Ranza E."/>
            <person name="Santoni F.A."/>
            <person name="Aldhalaan H."/>
            <person name="Al-Asmari A."/>
            <person name="Faqeih E.A."/>
            <person name="Ahmed J."/>
            <person name="Kornau H.C."/>
            <person name="Bellen H.J."/>
            <person name="Antonarakis S.E."/>
        </authorList>
    </citation>
    <scope>DISRUPTION PHENOTYPE</scope>
    <scope>FUNCTION</scope>
</reference>
<gene>
    <name type="primary">Iqsec1</name>
    <name type="synonym">Kiaa0763</name>
</gene>
<accession>Q8R0S2</accession>
<accession>Q3TZC3</accession>
<accession>Q5DU15</accession>
<organism>
    <name type="scientific">Mus musculus</name>
    <name type="common">Mouse</name>
    <dbReference type="NCBI Taxonomy" id="10090"/>
    <lineage>
        <taxon>Eukaryota</taxon>
        <taxon>Metazoa</taxon>
        <taxon>Chordata</taxon>
        <taxon>Craniata</taxon>
        <taxon>Vertebrata</taxon>
        <taxon>Euteleostomi</taxon>
        <taxon>Mammalia</taxon>
        <taxon>Eutheria</taxon>
        <taxon>Euarchontoglires</taxon>
        <taxon>Glires</taxon>
        <taxon>Rodentia</taxon>
        <taxon>Myomorpha</taxon>
        <taxon>Muroidea</taxon>
        <taxon>Muridae</taxon>
        <taxon>Murinae</taxon>
        <taxon>Mus</taxon>
        <taxon>Mus</taxon>
    </lineage>
</organism>
<keyword id="KW-0025">Alternative splicing</keyword>
<keyword id="KW-0175">Coiled coil</keyword>
<keyword id="KW-0963">Cytoplasm</keyword>
<keyword id="KW-0968">Cytoplasmic vesicle</keyword>
<keyword id="KW-0344">Guanine-nucleotide releasing factor</keyword>
<keyword id="KW-0446">Lipid-binding</keyword>
<keyword id="KW-0539">Nucleus</keyword>
<keyword id="KW-0597">Phosphoprotein</keyword>
<keyword id="KW-1185">Reference proteome</keyword>
<keyword id="KW-0770">Synapse</keyword>
<comment type="function">
    <text evidence="1 2 8">Guanine nucleotide exchange factor for ARF1 and ARF6. Guanine nucleotide exchange factor activity is enhanced by lipid binding. Accelerates GTP binding by ARFs of all three classes. Guanine nucleotide exchange protein for ARF6, mediating internalization of beta-1 integrin (By similarity). Involved in neuronal development (PubMed:31607425). In neurons, plays a role in the control of vesicle formation by endocytoc cargo. Upon long term depression, interacts with GRIA2 and mediates the activation of ARF6 to internalize synaptic AMPAR receptors (By similarity).</text>
</comment>
<comment type="subunit">
    <text evidence="1 2">Interacts with ARF1 and ARF6. Interacts with GRIA2; the interaction is required for ARF6 activation.</text>
</comment>
<comment type="subcellular location">
    <subcellularLocation>
        <location evidence="2">Cytoplasm</location>
    </subcellularLocation>
    <subcellularLocation>
        <location evidence="2">Nucleus</location>
    </subcellularLocation>
    <subcellularLocation>
        <location evidence="7">Postsynaptic density</location>
    </subcellularLocation>
    <subcellularLocation>
        <location evidence="7">Cytoplasmic vesicle</location>
        <location evidence="7">Secretory vesicle</location>
        <location evidence="7">Synaptic vesicle</location>
    </subcellularLocation>
    <text evidence="2">At steady state, may be preferentially cytosolic.</text>
</comment>
<comment type="alternative products">
    <event type="alternative splicing"/>
    <isoform>
        <id>Q8R0S2-1</id>
        <name>1</name>
        <sequence type="displayed"/>
    </isoform>
    <isoform>
        <id>Q8R0S2-2</id>
        <name>2</name>
        <sequence type="described" ref="VSP_019759"/>
    </isoform>
</comment>
<comment type="tissue specificity">
    <text evidence="7">Expressed in hippocampus.</text>
</comment>
<comment type="developmental stage">
    <text evidence="7">Expression is first detected at postanatal day P7 and increases until P42 (at protein level).</text>
</comment>
<comment type="domain">
    <text evidence="2">The PH domain mediates interaction with lipid membranes that contain phosphatidylinositol-4,5-bisphosphate, but does not bind membranes that lack phosphatidylinositol-4,5-bisphosphate.</text>
</comment>
<comment type="disruption phenotype">
    <text evidence="8">Mice with a conditional knockout in cortical neurons exhibit an increased density of dendritic spines with an immature morphology.</text>
</comment>
<comment type="similarity">
    <text evidence="10">Belongs to the BRAG family.</text>
</comment>
<dbReference type="EMBL" id="AC121954">
    <property type="status" value="NOT_ANNOTATED_CDS"/>
    <property type="molecule type" value="Genomic_DNA"/>
</dbReference>
<dbReference type="EMBL" id="AK157963">
    <property type="protein sequence ID" value="BAE34286.1"/>
    <property type="molecule type" value="mRNA"/>
</dbReference>
<dbReference type="EMBL" id="BC026481">
    <property type="protein sequence ID" value="AAH26481.1"/>
    <property type="molecule type" value="mRNA"/>
</dbReference>
<dbReference type="EMBL" id="AK220355">
    <property type="protein sequence ID" value="BAD90418.1"/>
    <property type="molecule type" value="mRNA"/>
</dbReference>
<dbReference type="CCDS" id="CCDS51850.1">
    <molecule id="Q8R0S2-1"/>
</dbReference>
<dbReference type="RefSeq" id="NP_001127855.1">
    <molecule id="Q8R0S2-1"/>
    <property type="nucleotide sequence ID" value="NM_001134383.2"/>
</dbReference>
<dbReference type="RefSeq" id="NP_001395879.1">
    <molecule id="Q8R0S2-2"/>
    <property type="nucleotide sequence ID" value="NM_001408950.1"/>
</dbReference>
<dbReference type="SMR" id="Q8R0S2"/>
<dbReference type="BioGRID" id="231231">
    <property type="interactions" value="35"/>
</dbReference>
<dbReference type="FunCoup" id="Q8R0S2">
    <property type="interactions" value="1518"/>
</dbReference>
<dbReference type="IntAct" id="Q8R0S2">
    <property type="interactions" value="14"/>
</dbReference>
<dbReference type="MINT" id="Q8R0S2"/>
<dbReference type="STRING" id="10090.ENSMUSP00000098710"/>
<dbReference type="GlyGen" id="Q8R0S2">
    <property type="glycosylation" value="3 sites, 1 N-linked glycan (1 site), 1 O-linked glycan (2 sites)"/>
</dbReference>
<dbReference type="iPTMnet" id="Q8R0S2"/>
<dbReference type="PhosphoSitePlus" id="Q8R0S2"/>
<dbReference type="SwissPalm" id="Q8R0S2"/>
<dbReference type="jPOST" id="Q8R0S2"/>
<dbReference type="PaxDb" id="10090-ENSMUSP00000140030"/>
<dbReference type="PeptideAtlas" id="Q8R0S2"/>
<dbReference type="ProteomicsDB" id="269090">
    <molecule id="Q8R0S2-1"/>
</dbReference>
<dbReference type="ProteomicsDB" id="269091">
    <molecule id="Q8R0S2-2"/>
</dbReference>
<dbReference type="Pumba" id="Q8R0S2"/>
<dbReference type="Antibodypedia" id="26313">
    <property type="antibodies" value="46 antibodies from 23 providers"/>
</dbReference>
<dbReference type="DNASU" id="232227"/>
<dbReference type="Ensembl" id="ENSMUST00000101153.10">
    <molecule id="Q8R0S2-1"/>
    <property type="protein sequence ID" value="ENSMUSP00000098712.4"/>
    <property type="gene ID" value="ENSMUSG00000034312.16"/>
</dbReference>
<dbReference type="GeneID" id="232227"/>
<dbReference type="KEGG" id="mmu:232227"/>
<dbReference type="UCSC" id="uc009cxq.2">
    <molecule id="Q8R0S2-1"/>
    <property type="organism name" value="mouse"/>
</dbReference>
<dbReference type="UCSC" id="uc033itn.1">
    <molecule id="Q8R0S2-2"/>
    <property type="organism name" value="mouse"/>
</dbReference>
<dbReference type="AGR" id="MGI:1196356"/>
<dbReference type="CTD" id="9922"/>
<dbReference type="MGI" id="MGI:1196356">
    <property type="gene designation" value="Iqsec1"/>
</dbReference>
<dbReference type="VEuPathDB" id="HostDB:ENSMUSG00000034312"/>
<dbReference type="eggNOG" id="KOG0931">
    <property type="taxonomic scope" value="Eukaryota"/>
</dbReference>
<dbReference type="GeneTree" id="ENSGT00940000156915"/>
<dbReference type="HOGENOM" id="CLU_004328_0_1_1"/>
<dbReference type="InParanoid" id="Q8R0S2"/>
<dbReference type="OrthoDB" id="430364at2759"/>
<dbReference type="PhylomeDB" id="Q8R0S2"/>
<dbReference type="TreeFam" id="TF323811"/>
<dbReference type="BioGRID-ORCS" id="232227">
    <property type="hits" value="2 hits in 79 CRISPR screens"/>
</dbReference>
<dbReference type="CD-CODE" id="CE726F99">
    <property type="entry name" value="Postsynaptic density"/>
</dbReference>
<dbReference type="ChiTaRS" id="Iqsec1">
    <property type="organism name" value="mouse"/>
</dbReference>
<dbReference type="PRO" id="PR:Q8R0S2"/>
<dbReference type="Proteomes" id="UP000000589">
    <property type="component" value="Chromosome 6"/>
</dbReference>
<dbReference type="RNAct" id="Q8R0S2">
    <property type="molecule type" value="protein"/>
</dbReference>
<dbReference type="Bgee" id="ENSMUSG00000034312">
    <property type="expression patterns" value="Expressed in granulocyte and 247 other cell types or tissues"/>
</dbReference>
<dbReference type="ExpressionAtlas" id="Q8R0S2">
    <property type="expression patterns" value="baseline and differential"/>
</dbReference>
<dbReference type="GO" id="GO:0098978">
    <property type="term" value="C:glutamatergic synapse"/>
    <property type="evidence" value="ECO:0000314"/>
    <property type="project" value="SynGO"/>
</dbReference>
<dbReference type="GO" id="GO:0005634">
    <property type="term" value="C:nucleus"/>
    <property type="evidence" value="ECO:0007669"/>
    <property type="project" value="UniProtKB-SubCell"/>
</dbReference>
<dbReference type="GO" id="GO:0099092">
    <property type="term" value="C:postsynaptic density, intracellular component"/>
    <property type="evidence" value="ECO:0000314"/>
    <property type="project" value="SynGO"/>
</dbReference>
<dbReference type="GO" id="GO:0098685">
    <property type="term" value="C:Schaffer collateral - CA1 synapse"/>
    <property type="evidence" value="ECO:0000314"/>
    <property type="project" value="SynGO"/>
</dbReference>
<dbReference type="GO" id="GO:0008021">
    <property type="term" value="C:synaptic vesicle"/>
    <property type="evidence" value="ECO:0007669"/>
    <property type="project" value="UniProtKB-SubCell"/>
</dbReference>
<dbReference type="GO" id="GO:0005085">
    <property type="term" value="F:guanyl-nucleotide exchange factor activity"/>
    <property type="evidence" value="ECO:0007669"/>
    <property type="project" value="UniProtKB-KW"/>
</dbReference>
<dbReference type="GO" id="GO:0008289">
    <property type="term" value="F:lipid binding"/>
    <property type="evidence" value="ECO:0007669"/>
    <property type="project" value="UniProtKB-KW"/>
</dbReference>
<dbReference type="GO" id="GO:0019901">
    <property type="term" value="F:protein kinase binding"/>
    <property type="evidence" value="ECO:0000353"/>
    <property type="project" value="ARUK-UCL"/>
</dbReference>
<dbReference type="GO" id="GO:0060996">
    <property type="term" value="P:dendritic spine development"/>
    <property type="evidence" value="ECO:0000315"/>
    <property type="project" value="UniProtKB"/>
</dbReference>
<dbReference type="GO" id="GO:0120183">
    <property type="term" value="P:positive regulation of focal adhesion disassembly"/>
    <property type="evidence" value="ECO:0000315"/>
    <property type="project" value="ARUK-UCL"/>
</dbReference>
<dbReference type="GO" id="GO:0051549">
    <property type="term" value="P:positive regulation of keratinocyte migration"/>
    <property type="evidence" value="ECO:0000315"/>
    <property type="project" value="ARUK-UCL"/>
</dbReference>
<dbReference type="GO" id="GO:0099170">
    <property type="term" value="P:postsynaptic modulation of chemical synaptic transmission"/>
    <property type="evidence" value="ECO:0000314"/>
    <property type="project" value="SynGO"/>
</dbReference>
<dbReference type="GO" id="GO:0032012">
    <property type="term" value="P:regulation of ARF protein signal transduction"/>
    <property type="evidence" value="ECO:0007669"/>
    <property type="project" value="InterPro"/>
</dbReference>
<dbReference type="GO" id="GO:0099149">
    <property type="term" value="P:regulation of postsynaptic neurotransmitter receptor internalization"/>
    <property type="evidence" value="ECO:0000314"/>
    <property type="project" value="SynGO"/>
</dbReference>
<dbReference type="CDD" id="cd13318">
    <property type="entry name" value="PH_IQSEC"/>
    <property type="match status" value="1"/>
</dbReference>
<dbReference type="CDD" id="cd00171">
    <property type="entry name" value="Sec7"/>
    <property type="match status" value="1"/>
</dbReference>
<dbReference type="FunFam" id="1.10.1000.11:FF:000001">
    <property type="entry name" value="IQ motif and SEC7 domain-containing protein 1"/>
    <property type="match status" value="1"/>
</dbReference>
<dbReference type="FunFam" id="1.10.220.20:FF:000001">
    <property type="entry name" value="IQ motif and SEC7 domain-containing protein 1"/>
    <property type="match status" value="1"/>
</dbReference>
<dbReference type="FunFam" id="2.30.29.30:FF:000004">
    <property type="entry name" value="IQ motif and SEC7 domain-containing protein 1"/>
    <property type="match status" value="1"/>
</dbReference>
<dbReference type="Gene3D" id="1.10.220.20">
    <property type="match status" value="1"/>
</dbReference>
<dbReference type="Gene3D" id="1.10.1000.11">
    <property type="entry name" value="Arf Nucleotide-binding Site Opener,domain 2"/>
    <property type="match status" value="1"/>
</dbReference>
<dbReference type="Gene3D" id="2.30.29.30">
    <property type="entry name" value="Pleckstrin-homology domain (PH domain)/Phosphotyrosine-binding domain (PTB)"/>
    <property type="match status" value="1"/>
</dbReference>
<dbReference type="InterPro" id="IPR033742">
    <property type="entry name" value="IQSEC_PH"/>
</dbReference>
<dbReference type="InterPro" id="IPR011993">
    <property type="entry name" value="PH-like_dom_sf"/>
</dbReference>
<dbReference type="InterPro" id="IPR023394">
    <property type="entry name" value="Sec7_C_sf"/>
</dbReference>
<dbReference type="InterPro" id="IPR000904">
    <property type="entry name" value="Sec7_dom"/>
</dbReference>
<dbReference type="InterPro" id="IPR035999">
    <property type="entry name" value="Sec7_dom_sf"/>
</dbReference>
<dbReference type="PANTHER" id="PTHR10663">
    <property type="entry name" value="GUANYL-NUCLEOTIDE EXCHANGE FACTOR"/>
    <property type="match status" value="1"/>
</dbReference>
<dbReference type="PANTHER" id="PTHR10663:SF327">
    <property type="entry name" value="IQ MOTIF AND SEC7 DOMAIN-CONTAINING PROTEIN 1"/>
    <property type="match status" value="1"/>
</dbReference>
<dbReference type="Pfam" id="PF16453">
    <property type="entry name" value="IQ_SEC7_PH"/>
    <property type="match status" value="1"/>
</dbReference>
<dbReference type="Pfam" id="PF01369">
    <property type="entry name" value="Sec7"/>
    <property type="match status" value="1"/>
</dbReference>
<dbReference type="SMART" id="SM00222">
    <property type="entry name" value="Sec7"/>
    <property type="match status" value="1"/>
</dbReference>
<dbReference type="SUPFAM" id="SSF50729">
    <property type="entry name" value="PH domain-like"/>
    <property type="match status" value="1"/>
</dbReference>
<dbReference type="SUPFAM" id="SSF48425">
    <property type="entry name" value="Sec7 domain"/>
    <property type="match status" value="1"/>
</dbReference>
<dbReference type="PROSITE" id="PS50096">
    <property type="entry name" value="IQ"/>
    <property type="match status" value="1"/>
</dbReference>
<dbReference type="PROSITE" id="PS50190">
    <property type="entry name" value="SEC7"/>
    <property type="match status" value="1"/>
</dbReference>
<sequence length="961" mass="108015">MWCLHCNSERTQSLLELELDSGVEGEAPSSETGTSLDSPSAYHQGPLVPGSSLSPDHYEHTSVGAYGLYAGPGPQQRTRRPRLQHSTSVLRKQAEEEAIKRSRSLSESYELSSDLQDKQVEMLERKYGGRLVTRHAARTIQTAFRQYQMNKNFERLRSSMSENRMSRRIVLSNMRMQFSFEGPEKVHSSYFEGKQVSVTNDGSQLGALVPSECGDLSDPALKSPAPSSDFADAITELEDAFSRQVKSLAESIDDALNCRSLHSEEVPASDTARARDTEPKPGLHGMDHRKLDEMTASYSDVTLYIDEEELSPPLPLSQAGDRPSSTESDLRLRSGGAAQDYWALAHKEDKADTDTSCRSTPSLERPEPRLRVEHLPLLTIEPPSDSSVELSDRSDRSSLKRQSAYERSLGGQQGSPKHGPHGGPPKGLPREEPELRPRPPRPLESHLAINGSANRQSKSESDYSDGDNDSINSTSNSNDTINCSSESSSRDSLREQTLSKQTYHKETRNSWDSPAFSNDVIRKRHYRIGLNLFNKKPEKGIQYLIERGFVPDTPVGVAHFLLQRKGLSRQMIGEFLGNRQKQFNRDVLDCVVDEMDFSAMELDEALRKFQAHIRVQGEAQKVERLIEAFSQRYCVCNPGVVRQFRNPDTIFILAFAIILLNTDMYSPNVKPERKMKLEDFVKNLRGVDDGEDIPRETLIGIYERIRKRELKTNEDHVSQVQKVEKLIVGKKPIGSLHHGLGCVLSLPHRRLVCYCRLFEVPDPNKPQKLGLHQREIFLFNDLLVVTKIFQKKKNSVTYSFRQSFSLYGMQVLLFENQYYPNGIRLTSAVPGADIKVLINFNAPNPQDRKKFTDDLRESVAEVQEMEKHRIESELEKQKGVVRPSMSQCSSLKKESGNGTLSRACLDDSYASGEGLKRSALSSSLRDLSEAGKRGRRSSAGSLESNVEFQPFQPPQPPVLCS</sequence>